<accession>Q5WKB6</accession>
<gene>
    <name evidence="1" type="primary">rlmN</name>
    <name type="ordered locus">ABC0650</name>
</gene>
<keyword id="KW-0004">4Fe-4S</keyword>
<keyword id="KW-0963">Cytoplasm</keyword>
<keyword id="KW-1015">Disulfide bond</keyword>
<keyword id="KW-0408">Iron</keyword>
<keyword id="KW-0411">Iron-sulfur</keyword>
<keyword id="KW-0479">Metal-binding</keyword>
<keyword id="KW-0489">Methyltransferase</keyword>
<keyword id="KW-1185">Reference proteome</keyword>
<keyword id="KW-0698">rRNA processing</keyword>
<keyword id="KW-0949">S-adenosyl-L-methionine</keyword>
<keyword id="KW-0808">Transferase</keyword>
<keyword id="KW-0819">tRNA processing</keyword>
<dbReference type="EC" id="2.1.1.192" evidence="1"/>
<dbReference type="EMBL" id="AP006627">
    <property type="protein sequence ID" value="BAD63189.1"/>
    <property type="molecule type" value="Genomic_DNA"/>
</dbReference>
<dbReference type="RefSeq" id="WP_011245505.1">
    <property type="nucleotide sequence ID" value="NC_006582.1"/>
</dbReference>
<dbReference type="SMR" id="Q5WKB6"/>
<dbReference type="STRING" id="66692.ABC0650"/>
<dbReference type="KEGG" id="bcl:ABC0650"/>
<dbReference type="eggNOG" id="COG0820">
    <property type="taxonomic scope" value="Bacteria"/>
</dbReference>
<dbReference type="HOGENOM" id="CLU_029101_0_1_9"/>
<dbReference type="OrthoDB" id="9793973at2"/>
<dbReference type="Proteomes" id="UP000001168">
    <property type="component" value="Chromosome"/>
</dbReference>
<dbReference type="GO" id="GO:0005737">
    <property type="term" value="C:cytoplasm"/>
    <property type="evidence" value="ECO:0007669"/>
    <property type="project" value="UniProtKB-SubCell"/>
</dbReference>
<dbReference type="GO" id="GO:0051539">
    <property type="term" value="F:4 iron, 4 sulfur cluster binding"/>
    <property type="evidence" value="ECO:0007669"/>
    <property type="project" value="UniProtKB-UniRule"/>
</dbReference>
<dbReference type="GO" id="GO:0046872">
    <property type="term" value="F:metal ion binding"/>
    <property type="evidence" value="ECO:0007669"/>
    <property type="project" value="UniProtKB-KW"/>
</dbReference>
<dbReference type="GO" id="GO:0070040">
    <property type="term" value="F:rRNA (adenine(2503)-C2-)-methyltransferase activity"/>
    <property type="evidence" value="ECO:0007669"/>
    <property type="project" value="UniProtKB-UniRule"/>
</dbReference>
<dbReference type="GO" id="GO:0019843">
    <property type="term" value="F:rRNA binding"/>
    <property type="evidence" value="ECO:0007669"/>
    <property type="project" value="UniProtKB-UniRule"/>
</dbReference>
<dbReference type="GO" id="GO:0002935">
    <property type="term" value="F:tRNA (adenine(37)-C2)-methyltransferase activity"/>
    <property type="evidence" value="ECO:0007669"/>
    <property type="project" value="UniProtKB-UniRule"/>
</dbReference>
<dbReference type="GO" id="GO:0000049">
    <property type="term" value="F:tRNA binding"/>
    <property type="evidence" value="ECO:0007669"/>
    <property type="project" value="UniProtKB-UniRule"/>
</dbReference>
<dbReference type="GO" id="GO:0070475">
    <property type="term" value="P:rRNA base methylation"/>
    <property type="evidence" value="ECO:0007669"/>
    <property type="project" value="UniProtKB-UniRule"/>
</dbReference>
<dbReference type="GO" id="GO:0030488">
    <property type="term" value="P:tRNA methylation"/>
    <property type="evidence" value="ECO:0007669"/>
    <property type="project" value="UniProtKB-UniRule"/>
</dbReference>
<dbReference type="CDD" id="cd01335">
    <property type="entry name" value="Radical_SAM"/>
    <property type="match status" value="1"/>
</dbReference>
<dbReference type="FunFam" id="3.20.20.70:FF:000014">
    <property type="entry name" value="Probable dual-specificity RNA methyltransferase RlmN"/>
    <property type="match status" value="1"/>
</dbReference>
<dbReference type="Gene3D" id="1.10.150.530">
    <property type="match status" value="1"/>
</dbReference>
<dbReference type="Gene3D" id="3.20.20.70">
    <property type="entry name" value="Aldolase class I"/>
    <property type="match status" value="1"/>
</dbReference>
<dbReference type="HAMAP" id="MF_01849">
    <property type="entry name" value="RNA_methyltr_RlmN"/>
    <property type="match status" value="1"/>
</dbReference>
<dbReference type="InterPro" id="IPR013785">
    <property type="entry name" value="Aldolase_TIM"/>
</dbReference>
<dbReference type="InterPro" id="IPR006638">
    <property type="entry name" value="Elp3/MiaA/NifB-like_rSAM"/>
</dbReference>
<dbReference type="InterPro" id="IPR040072">
    <property type="entry name" value="Methyltransferase_A"/>
</dbReference>
<dbReference type="InterPro" id="IPR048641">
    <property type="entry name" value="RlmN_N"/>
</dbReference>
<dbReference type="InterPro" id="IPR027492">
    <property type="entry name" value="RNA_MTrfase_RlmN"/>
</dbReference>
<dbReference type="InterPro" id="IPR004383">
    <property type="entry name" value="rRNA_lsu_MTrfase_RlmN/Cfr"/>
</dbReference>
<dbReference type="InterPro" id="IPR007197">
    <property type="entry name" value="rSAM"/>
</dbReference>
<dbReference type="NCBIfam" id="TIGR00048">
    <property type="entry name" value="rRNA_mod_RlmN"/>
    <property type="match status" value="1"/>
</dbReference>
<dbReference type="PANTHER" id="PTHR30544">
    <property type="entry name" value="23S RRNA METHYLTRANSFERASE"/>
    <property type="match status" value="1"/>
</dbReference>
<dbReference type="PANTHER" id="PTHR30544:SF5">
    <property type="entry name" value="RADICAL SAM CORE DOMAIN-CONTAINING PROTEIN"/>
    <property type="match status" value="1"/>
</dbReference>
<dbReference type="Pfam" id="PF04055">
    <property type="entry name" value="Radical_SAM"/>
    <property type="match status" value="1"/>
</dbReference>
<dbReference type="Pfam" id="PF21016">
    <property type="entry name" value="RlmN_N"/>
    <property type="match status" value="1"/>
</dbReference>
<dbReference type="PIRSF" id="PIRSF006004">
    <property type="entry name" value="CHP00048"/>
    <property type="match status" value="1"/>
</dbReference>
<dbReference type="SFLD" id="SFLDF00275">
    <property type="entry name" value="adenosine_C2_methyltransferase"/>
    <property type="match status" value="1"/>
</dbReference>
<dbReference type="SFLD" id="SFLDS00029">
    <property type="entry name" value="Radical_SAM"/>
    <property type="match status" value="1"/>
</dbReference>
<dbReference type="SMART" id="SM00729">
    <property type="entry name" value="Elp3"/>
    <property type="match status" value="1"/>
</dbReference>
<dbReference type="SUPFAM" id="SSF102114">
    <property type="entry name" value="Radical SAM enzymes"/>
    <property type="match status" value="1"/>
</dbReference>
<dbReference type="PROSITE" id="PS51918">
    <property type="entry name" value="RADICAL_SAM"/>
    <property type="match status" value="1"/>
</dbReference>
<evidence type="ECO:0000255" key="1">
    <source>
        <dbReference type="HAMAP-Rule" id="MF_01849"/>
    </source>
</evidence>
<evidence type="ECO:0000255" key="2">
    <source>
        <dbReference type="PROSITE-ProRule" id="PRU01266"/>
    </source>
</evidence>
<comment type="function">
    <text evidence="1">Specifically methylates position 2 of adenine 2503 in 23S rRNA and position 2 of adenine 37 in tRNAs.</text>
</comment>
<comment type="catalytic activity">
    <reaction evidence="1">
        <text>adenosine(2503) in 23S rRNA + 2 reduced [2Fe-2S]-[ferredoxin] + 2 S-adenosyl-L-methionine = 2-methyladenosine(2503) in 23S rRNA + 5'-deoxyadenosine + L-methionine + 2 oxidized [2Fe-2S]-[ferredoxin] + S-adenosyl-L-homocysteine</text>
        <dbReference type="Rhea" id="RHEA:42916"/>
        <dbReference type="Rhea" id="RHEA-COMP:10000"/>
        <dbReference type="Rhea" id="RHEA-COMP:10001"/>
        <dbReference type="Rhea" id="RHEA-COMP:10152"/>
        <dbReference type="Rhea" id="RHEA-COMP:10282"/>
        <dbReference type="ChEBI" id="CHEBI:17319"/>
        <dbReference type="ChEBI" id="CHEBI:33737"/>
        <dbReference type="ChEBI" id="CHEBI:33738"/>
        <dbReference type="ChEBI" id="CHEBI:57844"/>
        <dbReference type="ChEBI" id="CHEBI:57856"/>
        <dbReference type="ChEBI" id="CHEBI:59789"/>
        <dbReference type="ChEBI" id="CHEBI:74411"/>
        <dbReference type="ChEBI" id="CHEBI:74497"/>
        <dbReference type="EC" id="2.1.1.192"/>
    </reaction>
</comment>
<comment type="catalytic activity">
    <reaction evidence="1">
        <text>adenosine(37) in tRNA + 2 reduced [2Fe-2S]-[ferredoxin] + 2 S-adenosyl-L-methionine = 2-methyladenosine(37) in tRNA + 5'-deoxyadenosine + L-methionine + 2 oxidized [2Fe-2S]-[ferredoxin] + S-adenosyl-L-homocysteine</text>
        <dbReference type="Rhea" id="RHEA:43332"/>
        <dbReference type="Rhea" id="RHEA-COMP:10000"/>
        <dbReference type="Rhea" id="RHEA-COMP:10001"/>
        <dbReference type="Rhea" id="RHEA-COMP:10162"/>
        <dbReference type="Rhea" id="RHEA-COMP:10485"/>
        <dbReference type="ChEBI" id="CHEBI:17319"/>
        <dbReference type="ChEBI" id="CHEBI:33737"/>
        <dbReference type="ChEBI" id="CHEBI:33738"/>
        <dbReference type="ChEBI" id="CHEBI:57844"/>
        <dbReference type="ChEBI" id="CHEBI:57856"/>
        <dbReference type="ChEBI" id="CHEBI:59789"/>
        <dbReference type="ChEBI" id="CHEBI:74411"/>
        <dbReference type="ChEBI" id="CHEBI:74497"/>
        <dbReference type="EC" id="2.1.1.192"/>
    </reaction>
</comment>
<comment type="cofactor">
    <cofactor evidence="1">
        <name>[4Fe-4S] cluster</name>
        <dbReference type="ChEBI" id="CHEBI:49883"/>
    </cofactor>
    <text evidence="1">Binds 1 [4Fe-4S] cluster. The cluster is coordinated with 3 cysteines and an exchangeable S-adenosyl-L-methionine.</text>
</comment>
<comment type="subcellular location">
    <subcellularLocation>
        <location evidence="1">Cytoplasm</location>
    </subcellularLocation>
</comment>
<comment type="miscellaneous">
    <text evidence="1">Reaction proceeds by a ping-pong mechanism involving intermediate methylation of a conserved cysteine residue.</text>
</comment>
<comment type="similarity">
    <text evidence="1">Belongs to the radical SAM superfamily. RlmN family.</text>
</comment>
<feature type="chain" id="PRO_0000350032" description="Probable dual-specificity RNA methyltransferase RlmN">
    <location>
        <begin position="1"/>
        <end position="356"/>
    </location>
</feature>
<feature type="domain" description="Radical SAM core" evidence="2">
    <location>
        <begin position="98"/>
        <end position="336"/>
    </location>
</feature>
<feature type="active site" description="Proton acceptor" evidence="1">
    <location>
        <position position="92"/>
    </location>
</feature>
<feature type="active site" description="S-methylcysteine intermediate" evidence="1">
    <location>
        <position position="341"/>
    </location>
</feature>
<feature type="binding site" evidence="1">
    <location>
        <position position="112"/>
    </location>
    <ligand>
        <name>[4Fe-4S] cluster</name>
        <dbReference type="ChEBI" id="CHEBI:49883"/>
        <note>4Fe-4S-S-AdoMet</note>
    </ligand>
</feature>
<feature type="binding site" evidence="1">
    <location>
        <position position="116"/>
    </location>
    <ligand>
        <name>[4Fe-4S] cluster</name>
        <dbReference type="ChEBI" id="CHEBI:49883"/>
        <note>4Fe-4S-S-AdoMet</note>
    </ligand>
</feature>
<feature type="binding site" evidence="1">
    <location>
        <position position="119"/>
    </location>
    <ligand>
        <name>[4Fe-4S] cluster</name>
        <dbReference type="ChEBI" id="CHEBI:49883"/>
        <note>4Fe-4S-S-AdoMet</note>
    </ligand>
</feature>
<feature type="binding site" evidence="1">
    <location>
        <begin position="164"/>
        <end position="165"/>
    </location>
    <ligand>
        <name>S-adenosyl-L-methionine</name>
        <dbReference type="ChEBI" id="CHEBI:59789"/>
    </ligand>
</feature>
<feature type="binding site" evidence="1">
    <location>
        <position position="196"/>
    </location>
    <ligand>
        <name>S-adenosyl-L-methionine</name>
        <dbReference type="ChEBI" id="CHEBI:59789"/>
    </ligand>
</feature>
<feature type="binding site" evidence="1">
    <location>
        <begin position="219"/>
        <end position="221"/>
    </location>
    <ligand>
        <name>S-adenosyl-L-methionine</name>
        <dbReference type="ChEBI" id="CHEBI:59789"/>
    </ligand>
</feature>
<feature type="binding site" evidence="1">
    <location>
        <position position="297"/>
    </location>
    <ligand>
        <name>S-adenosyl-L-methionine</name>
        <dbReference type="ChEBI" id="CHEBI:59789"/>
    </ligand>
</feature>
<feature type="disulfide bond" description="(transient)" evidence="1">
    <location>
        <begin position="105"/>
        <end position="341"/>
    </location>
</feature>
<reference key="1">
    <citation type="submission" date="2003-10" db="EMBL/GenBank/DDBJ databases">
        <title>The complete genome sequence of the alkaliphilic Bacillus clausii KSM-K16.</title>
        <authorList>
            <person name="Takaki Y."/>
            <person name="Kageyama Y."/>
            <person name="Shimamura S."/>
            <person name="Suzuki H."/>
            <person name="Nishi S."/>
            <person name="Hatada Y."/>
            <person name="Kawai S."/>
            <person name="Ito S."/>
            <person name="Horikoshi K."/>
        </authorList>
    </citation>
    <scope>NUCLEOTIDE SEQUENCE [LARGE SCALE GENOMIC DNA]</scope>
    <source>
        <strain>KSM-K16</strain>
    </source>
</reference>
<organism>
    <name type="scientific">Shouchella clausii (strain KSM-K16)</name>
    <name type="common">Alkalihalobacillus clausii</name>
    <dbReference type="NCBI Taxonomy" id="66692"/>
    <lineage>
        <taxon>Bacteria</taxon>
        <taxon>Bacillati</taxon>
        <taxon>Bacillota</taxon>
        <taxon>Bacilli</taxon>
        <taxon>Bacillales</taxon>
        <taxon>Bacillaceae</taxon>
        <taxon>Shouchella</taxon>
    </lineage>
</organism>
<protein>
    <recommendedName>
        <fullName evidence="1">Probable dual-specificity RNA methyltransferase RlmN</fullName>
        <ecNumber evidence="1">2.1.1.192</ecNumber>
    </recommendedName>
    <alternativeName>
        <fullName evidence="1">23S rRNA (adenine(2503)-C(2))-methyltransferase</fullName>
    </alternativeName>
    <alternativeName>
        <fullName evidence="1">23S rRNA m2A2503 methyltransferase</fullName>
    </alternativeName>
    <alternativeName>
        <fullName evidence="1">Ribosomal RNA large subunit methyltransferase N</fullName>
    </alternativeName>
    <alternativeName>
        <fullName evidence="1">tRNA (adenine(37)-C(2))-methyltransferase</fullName>
    </alternativeName>
    <alternativeName>
        <fullName evidence="1">tRNA m2A37 methyltransferase</fullName>
    </alternativeName>
</protein>
<proteinExistence type="inferred from homology"/>
<name>RLMN_SHOC1</name>
<sequence length="356" mass="40945">MSKESIYGLTMAQLTDWLMERGHKKFRATQVWDWLYRKRVTTFAEMTNVNKDCLQLLEDHFAIETMSEHVRQESKDGTIKFLFRLQDGNLIETVLMRHKYGFSVCVTTQVGCNIGCSFCASGLLTKNRDLSSGEIVEQIMKVQFHLDQVGKEERVSHVVVMGIGEPFDNFQNTVDFLEIIKDHKGLAIGARHITVSTSGLAHKIYEFADLKLQVNLAVSLHAPNNELRSRIMKINKAFPIEKLMDSINYYIEKTNRRVTYEYILIKDVNDHKEEALQLAELIGDKRHLSYVNLIPYNPVDEHSQYQRSEPEAISQFFDTLKKKGINCGVRLEHGTDIDAACGQLRSKQEKKKVKVN</sequence>